<gene>
    <name evidence="1" type="primary">PB2</name>
</gene>
<protein>
    <recommendedName>
        <fullName evidence="1">Polymerase basic protein 2</fullName>
    </recommendedName>
    <alternativeName>
        <fullName evidence="1">RNA-directed RNA polymerase subunit P3</fullName>
    </alternativeName>
</protein>
<feature type="chain" id="PRO_0000279641" description="Polymerase basic protein 2">
    <location>
        <begin position="1"/>
        <end position="759"/>
    </location>
</feature>
<feature type="short sequence motif" description="Nuclear localization signal" evidence="1">
    <location>
        <begin position="736"/>
        <end position="739"/>
    </location>
</feature>
<feature type="site" description="Mammalian adaptation" evidence="1">
    <location>
        <position position="627"/>
    </location>
</feature>
<name>PB2_I78A8</name>
<proteinExistence type="inferred from homology"/>
<organismHost>
    <name type="scientific">Aves</name>
    <dbReference type="NCBI Taxonomy" id="8782"/>
</organismHost>
<organismHost>
    <name type="scientific">Cetacea</name>
    <name type="common">whales</name>
    <dbReference type="NCBI Taxonomy" id="9721"/>
</organismHost>
<organismHost>
    <name type="scientific">Homo sapiens</name>
    <name type="common">Human</name>
    <dbReference type="NCBI Taxonomy" id="9606"/>
</organismHost>
<organismHost>
    <name type="scientific">Phocidae</name>
    <name type="common">true seals</name>
    <dbReference type="NCBI Taxonomy" id="9709"/>
</organismHost>
<organismHost>
    <name type="scientific">Sus scrofa</name>
    <name type="common">Pig</name>
    <dbReference type="NCBI Taxonomy" id="9823"/>
</organismHost>
<organism>
    <name type="scientific">Influenza A virus (strain A/Memphis/18/1978 H3N2)</name>
    <dbReference type="NCBI Taxonomy" id="383579"/>
    <lineage>
        <taxon>Viruses</taxon>
        <taxon>Riboviria</taxon>
        <taxon>Orthornavirae</taxon>
        <taxon>Negarnaviricota</taxon>
        <taxon>Polyploviricotina</taxon>
        <taxon>Insthoviricetes</taxon>
        <taxon>Articulavirales</taxon>
        <taxon>Orthomyxoviridae</taxon>
        <taxon>Alphainfluenzavirus</taxon>
        <taxon>Alphainfluenzavirus influenzae</taxon>
        <taxon>Influenza A virus</taxon>
    </lineage>
</organism>
<dbReference type="EMBL" id="CY006714">
    <property type="protein sequence ID" value="ABB96351.1"/>
    <property type="molecule type" value="Genomic_RNA"/>
</dbReference>
<dbReference type="SMR" id="Q2VNC3"/>
<dbReference type="PRO" id="PR:Q2VNC3"/>
<dbReference type="Proteomes" id="UP000008574">
    <property type="component" value="Genome"/>
</dbReference>
<dbReference type="GO" id="GO:0033650">
    <property type="term" value="C:host cell mitochondrion"/>
    <property type="evidence" value="ECO:0007669"/>
    <property type="project" value="UniProtKB-SubCell"/>
</dbReference>
<dbReference type="GO" id="GO:0042025">
    <property type="term" value="C:host cell nucleus"/>
    <property type="evidence" value="ECO:0007669"/>
    <property type="project" value="UniProtKB-SubCell"/>
</dbReference>
<dbReference type="GO" id="GO:0044423">
    <property type="term" value="C:virion component"/>
    <property type="evidence" value="ECO:0007669"/>
    <property type="project" value="UniProtKB-UniRule"/>
</dbReference>
<dbReference type="GO" id="GO:0003723">
    <property type="term" value="F:RNA binding"/>
    <property type="evidence" value="ECO:0007669"/>
    <property type="project" value="UniProtKB-UniRule"/>
</dbReference>
<dbReference type="GO" id="GO:0003968">
    <property type="term" value="F:RNA-directed RNA polymerase activity"/>
    <property type="evidence" value="ECO:0007669"/>
    <property type="project" value="UniProtKB-UniRule"/>
</dbReference>
<dbReference type="GO" id="GO:0006370">
    <property type="term" value="P:7-methylguanosine mRNA capping"/>
    <property type="evidence" value="ECO:0007669"/>
    <property type="project" value="UniProtKB-UniRule"/>
</dbReference>
<dbReference type="GO" id="GO:0075526">
    <property type="term" value="P:cap snatching"/>
    <property type="evidence" value="ECO:0007669"/>
    <property type="project" value="UniProtKB-UniRule"/>
</dbReference>
<dbReference type="GO" id="GO:0006351">
    <property type="term" value="P:DNA-templated transcription"/>
    <property type="evidence" value="ECO:0007669"/>
    <property type="project" value="UniProtKB-UniRule"/>
</dbReference>
<dbReference type="GO" id="GO:0039545">
    <property type="term" value="P:symbiont-mediated suppression of host cytoplasmic pattern recognition receptor signaling pathway via inhibition of MAVS activity"/>
    <property type="evidence" value="ECO:0007669"/>
    <property type="project" value="UniProtKB-UniRule"/>
</dbReference>
<dbReference type="GO" id="GO:0039657">
    <property type="term" value="P:symbiont-mediated suppression of host gene expression"/>
    <property type="evidence" value="ECO:0007669"/>
    <property type="project" value="UniProtKB-KW"/>
</dbReference>
<dbReference type="GO" id="GO:0039523">
    <property type="term" value="P:symbiont-mediated suppression of host mRNA transcription via inhibition of RNA polymerase II activity"/>
    <property type="evidence" value="ECO:0007669"/>
    <property type="project" value="UniProtKB-UniRule"/>
</dbReference>
<dbReference type="GO" id="GO:0039694">
    <property type="term" value="P:viral RNA genome replication"/>
    <property type="evidence" value="ECO:0007669"/>
    <property type="project" value="InterPro"/>
</dbReference>
<dbReference type="FunFam" id="3.30.30.90:FF:000001">
    <property type="entry name" value="Polymerase basic protein 2"/>
    <property type="match status" value="1"/>
</dbReference>
<dbReference type="Gene3D" id="3.30.30.90">
    <property type="entry name" value="Polymerase Basic Protein 2, C-terminal domain"/>
    <property type="match status" value="1"/>
</dbReference>
<dbReference type="HAMAP" id="MF_04062">
    <property type="entry name" value="INV_PB2"/>
    <property type="match status" value="1"/>
</dbReference>
<dbReference type="InterPro" id="IPR049110">
    <property type="entry name" value="Flu_PB2_2nd"/>
</dbReference>
<dbReference type="InterPro" id="IPR049114">
    <property type="entry name" value="Flu_PB2_6th"/>
</dbReference>
<dbReference type="InterPro" id="IPR049115">
    <property type="entry name" value="Flu_PB2_C"/>
</dbReference>
<dbReference type="InterPro" id="IPR048298">
    <property type="entry name" value="Flu_PB2_CAP-bd"/>
</dbReference>
<dbReference type="InterPro" id="IPR049111">
    <property type="entry name" value="Flu_PB2_middle"/>
</dbReference>
<dbReference type="InterPro" id="IPR049106">
    <property type="entry name" value="Flu_PB2_N"/>
</dbReference>
<dbReference type="InterPro" id="IPR001591">
    <property type="entry name" value="INV_PB2"/>
</dbReference>
<dbReference type="InterPro" id="IPR049113">
    <property type="entry name" value="PB2_helical"/>
</dbReference>
<dbReference type="InterPro" id="IPR037258">
    <property type="entry name" value="PDB2_C"/>
</dbReference>
<dbReference type="Pfam" id="PF20947">
    <property type="entry name" value="Flu_PB2_1st"/>
    <property type="match status" value="1"/>
</dbReference>
<dbReference type="Pfam" id="PF20948">
    <property type="entry name" value="Flu_PB2_2nd"/>
    <property type="match status" value="1"/>
</dbReference>
<dbReference type="Pfam" id="PF20949">
    <property type="entry name" value="Flu_PB2_3rd"/>
    <property type="match status" value="1"/>
</dbReference>
<dbReference type="Pfam" id="PF20950">
    <property type="entry name" value="Flu_PB2_4th"/>
    <property type="match status" value="1"/>
</dbReference>
<dbReference type="Pfam" id="PF00604">
    <property type="entry name" value="Flu_PB2_5th"/>
    <property type="match status" value="1"/>
</dbReference>
<dbReference type="Pfam" id="PF20951">
    <property type="entry name" value="Flu_PB2_6th"/>
    <property type="match status" value="1"/>
</dbReference>
<dbReference type="Pfam" id="PF20952">
    <property type="entry name" value="Flu_PB2_7th"/>
    <property type="match status" value="1"/>
</dbReference>
<dbReference type="SUPFAM" id="SSF160453">
    <property type="entry name" value="PB2 C-terminal domain-like"/>
    <property type="match status" value="1"/>
</dbReference>
<evidence type="ECO:0000255" key="1">
    <source>
        <dbReference type="HAMAP-Rule" id="MF_04062"/>
    </source>
</evidence>
<accession>Q2VNC3</accession>
<keyword id="KW-1157">Cap snatching</keyword>
<keyword id="KW-1262">Eukaryotic host gene expression shutoff by virus</keyword>
<keyword id="KW-1191">Eukaryotic host transcription shutoff by virus</keyword>
<keyword id="KW-1190">Host gene expression shutoff by virus</keyword>
<keyword id="KW-1045">Host mitochondrion</keyword>
<keyword id="KW-1048">Host nucleus</keyword>
<keyword id="KW-0945">Host-virus interaction</keyword>
<keyword id="KW-1090">Inhibition of host innate immune response by virus</keyword>
<keyword id="KW-1097">Inhibition of host MAVS by virus</keyword>
<keyword id="KW-1113">Inhibition of host RLR pathway by virus</keyword>
<keyword id="KW-1104">Inhibition of host RNA polymerase II by virus</keyword>
<keyword id="KW-0506">mRNA capping</keyword>
<keyword id="KW-0507">mRNA processing</keyword>
<keyword id="KW-0899">Viral immunoevasion</keyword>
<keyword id="KW-1195">Viral transcription</keyword>
<keyword id="KW-0946">Virion</keyword>
<reference key="1">
    <citation type="submission" date="2005-12" db="EMBL/GenBank/DDBJ databases">
        <title>The NIAID influenza genome sequencing project.</title>
        <authorList>
            <person name="Ghedin E."/>
            <person name="Spiro D."/>
            <person name="Miller N."/>
            <person name="Zaborsky J."/>
            <person name="Feldblyum T."/>
            <person name="Subbu V."/>
            <person name="Shumway M."/>
            <person name="Sparenborg J."/>
            <person name="Groveman L."/>
            <person name="Halpin R."/>
            <person name="Sitz J."/>
            <person name="Koo H."/>
            <person name="Salzberg S.L."/>
            <person name="Webster R.G."/>
            <person name="Hoffmann E."/>
            <person name="Krauss S."/>
            <person name="Naeve C."/>
            <person name="Bao Y."/>
            <person name="Bolotov P."/>
            <person name="Dernovoy D."/>
            <person name="Kiryutin B."/>
            <person name="Lipman D.J."/>
            <person name="Tatusova T."/>
        </authorList>
    </citation>
    <scope>NUCLEOTIDE SEQUENCE [GENOMIC RNA]</scope>
</reference>
<comment type="function">
    <text evidence="1">Plays an essential role in transcription initiation and cap-stealing mechanism, in which cellular capped pre-mRNAs are used to generate primers for viral transcription. Recognizes and binds the 7-methylguanosine-containing cap of the target pre-RNA which is subsequently cleaved after 10-13 nucleotides by the viral protein PA. Plays a role in the initiation of the viral genome replication and modulates the activity of the ribonucleoprotein (RNP) complex. In addition, participates in the inhibition of type I interferon induction through interaction with and inhibition of the host mitochondrial antiviral signaling protein MAVS.</text>
</comment>
<comment type="subunit">
    <text evidence="1">Influenza RNA polymerase is composed of three subunits: PB1, PB2 and PA. Interacts (via N-terminus) with PB1 (via C-terminus). Interacts with nucleoprotein NP (via N-terminus). Interacts (via N-terminus) with host MAVS (via N-terminus); this interaction inhibits host innate immune response.</text>
</comment>
<comment type="subcellular location">
    <subcellularLocation>
        <location evidence="1">Virion</location>
    </subcellularLocation>
    <subcellularLocation>
        <location evidence="1">Host nucleus</location>
    </subcellularLocation>
    <subcellularLocation>
        <location evidence="1">Host mitochondrion</location>
    </subcellularLocation>
</comment>
<comment type="similarity">
    <text evidence="1">Belongs to the influenza viruses PB2 family.</text>
</comment>
<sequence>MERIKELRNLMSQSRTREILTKTTVDHMAIIKKYTSGRQEKNPSLRMKWMMAMKYPITADKRITEMVPERNEQGQTLWSKMSDAGSDRVMVSPLAVTWWNRNGPVTSTVHYPKVYKTYFDKVERLKHGTFGPVHFRNQVKIRRRVDINPGHADLSAKEAQDVIMEVVFPNEVGARILTSESQLTITKEKKEELQNCKISPLMVAYMLERELVRKTRFLPVAGGTSSMYIEVLHLTQGTCWEQMYTPGGEVRNDDVDQSLIIAARNIVRRAAVSADPLASLLEMCHSTQIGGTRMVDILRQNPTEEQAVDICKAAMGLRISSSFSFGGFTFKRTSGSSIKREEEVLTGNLQTLKIKVHEGYEEFTMVGKRATAILRKATRRLVQLIVSGRDEQSIAEAIIVAIVFSQEDCMIKAVRGDLNFVNRANQRLNPMHQLLRHFQKDAKVLFQNWGIEHIDNVMGMVGVLPDMTPSTEMSMRGIRVSKMGVDEYSSTERVVVSIDRFLRVRDQRGNVLLSPEEVSETQGTERLTITYSSSMMWEINGPESVLVNTYQWIIRNWETVKIQWSQNPTMLYNKMEFEPFQSLVPKAIRGQYSGFVRTLFQQMRDVLGTFDTTQIIKLLPFAAAPPKQSRMQFSSLTVNVRGSGMRILVRGNSPVFNYNKTTKRLTILGKDAGTLIEDPDESTSGVESAVLRGFLILGKEDRRYGPALSINELSNLTKGEKANVLIGQGDVVLVMKRKRDSSILTDSQTATKRIRMAIN</sequence>